<organism>
    <name type="scientific">Campylobacter concisus (strain 13826)</name>
    <dbReference type="NCBI Taxonomy" id="360104"/>
    <lineage>
        <taxon>Bacteria</taxon>
        <taxon>Pseudomonadati</taxon>
        <taxon>Campylobacterota</taxon>
        <taxon>Epsilonproteobacteria</taxon>
        <taxon>Campylobacterales</taxon>
        <taxon>Campylobacteraceae</taxon>
        <taxon>Campylobacter</taxon>
    </lineage>
</organism>
<evidence type="ECO:0000255" key="1">
    <source>
        <dbReference type="HAMAP-Rule" id="MF_00188"/>
    </source>
</evidence>
<keyword id="KW-0997">Cell inner membrane</keyword>
<keyword id="KW-1003">Cell membrane</keyword>
<keyword id="KW-0378">Hydrolase</keyword>
<keyword id="KW-0472">Membrane</keyword>
<keyword id="KW-0479">Metal-binding</keyword>
<keyword id="KW-0482">Metalloprotease</keyword>
<keyword id="KW-0645">Protease</keyword>
<keyword id="KW-0812">Transmembrane</keyword>
<keyword id="KW-1133">Transmembrane helix</keyword>
<keyword id="KW-0862">Zinc</keyword>
<reference key="1">
    <citation type="submission" date="2007-10" db="EMBL/GenBank/DDBJ databases">
        <title>Genome sequence of Campylobacter concisus 13826 isolated from human feces.</title>
        <authorList>
            <person name="Fouts D.E."/>
            <person name="Mongodin E.F."/>
            <person name="Puiu D."/>
            <person name="Sebastian Y."/>
            <person name="Miller W.G."/>
            <person name="Mandrell R.E."/>
            <person name="On S."/>
            <person name="Nelson K.E."/>
        </authorList>
    </citation>
    <scope>NUCLEOTIDE SEQUENCE [LARGE SCALE GENOMIC DNA]</scope>
    <source>
        <strain>13826</strain>
    </source>
</reference>
<accession>A7ZCL2</accession>
<protein>
    <recommendedName>
        <fullName evidence="1">Protease HtpX homolog</fullName>
        <ecNumber evidence="1">3.4.24.-</ecNumber>
    </recommendedName>
</protein>
<feature type="chain" id="PRO_1000020855" description="Protease HtpX homolog">
    <location>
        <begin position="1"/>
        <end position="288"/>
    </location>
</feature>
<feature type="transmembrane region" description="Helical" evidence="1">
    <location>
        <begin position="6"/>
        <end position="26"/>
    </location>
</feature>
<feature type="transmembrane region" description="Helical" evidence="1">
    <location>
        <begin position="28"/>
        <end position="48"/>
    </location>
</feature>
<feature type="transmembrane region" description="Helical" evidence="1">
    <location>
        <begin position="140"/>
        <end position="160"/>
    </location>
</feature>
<feature type="transmembrane region" description="Helical" evidence="1">
    <location>
        <begin position="179"/>
        <end position="199"/>
    </location>
</feature>
<feature type="active site" evidence="1">
    <location>
        <position position="131"/>
    </location>
</feature>
<feature type="binding site" evidence="1">
    <location>
        <position position="130"/>
    </location>
    <ligand>
        <name>Zn(2+)</name>
        <dbReference type="ChEBI" id="CHEBI:29105"/>
        <note>catalytic</note>
    </ligand>
</feature>
<feature type="binding site" evidence="1">
    <location>
        <position position="134"/>
    </location>
    <ligand>
        <name>Zn(2+)</name>
        <dbReference type="ChEBI" id="CHEBI:29105"/>
        <note>catalytic</note>
    </ligand>
</feature>
<feature type="binding site" evidence="1">
    <location>
        <position position="204"/>
    </location>
    <ligand>
        <name>Zn(2+)</name>
        <dbReference type="ChEBI" id="CHEBI:29105"/>
        <note>catalytic</note>
    </ligand>
</feature>
<sequence>MEIFKTAFLMVALMLVFIAVGGYVGGEQGMMIAFLMAAGMNIFSYFFSDKLVLKRYNAIPVDENNAHGLYEIVSRLTQKANLPMPKIYIIPEEVPNAFATGRNPSHAAVAVTEGLLKILNENEIEGVLAHELSHVRHYDILTGSVAAILAGAIAMVANFAKIGTLAGQNQNSQRNANPVIMLIIAVVMPLAATVIQMAISREREYKADKGAAYLTGHPEWLASALTKLENYSNSYVMQNASEQSAHMFIVNPFGSLTSKLSVLFRTHPSTSDRIAELQRLEQEIKRGM</sequence>
<dbReference type="EC" id="3.4.24.-" evidence="1"/>
<dbReference type="EMBL" id="CP000792">
    <property type="protein sequence ID" value="EAT98022.1"/>
    <property type="molecule type" value="Genomic_DNA"/>
</dbReference>
<dbReference type="RefSeq" id="WP_012001488.1">
    <property type="nucleotide sequence ID" value="NC_009802.2"/>
</dbReference>
<dbReference type="STRING" id="360104.CCC13826_0879"/>
<dbReference type="KEGG" id="cco:CCC13826_0879"/>
<dbReference type="eggNOG" id="COG0501">
    <property type="taxonomic scope" value="Bacteria"/>
</dbReference>
<dbReference type="HOGENOM" id="CLU_042266_3_0_7"/>
<dbReference type="OrthoDB" id="15218at2"/>
<dbReference type="Proteomes" id="UP000001121">
    <property type="component" value="Chromosome"/>
</dbReference>
<dbReference type="GO" id="GO:0005886">
    <property type="term" value="C:plasma membrane"/>
    <property type="evidence" value="ECO:0007669"/>
    <property type="project" value="UniProtKB-SubCell"/>
</dbReference>
<dbReference type="GO" id="GO:0004222">
    <property type="term" value="F:metalloendopeptidase activity"/>
    <property type="evidence" value="ECO:0007669"/>
    <property type="project" value="UniProtKB-UniRule"/>
</dbReference>
<dbReference type="GO" id="GO:0008270">
    <property type="term" value="F:zinc ion binding"/>
    <property type="evidence" value="ECO:0007669"/>
    <property type="project" value="UniProtKB-UniRule"/>
</dbReference>
<dbReference type="GO" id="GO:0006508">
    <property type="term" value="P:proteolysis"/>
    <property type="evidence" value="ECO:0007669"/>
    <property type="project" value="UniProtKB-KW"/>
</dbReference>
<dbReference type="CDD" id="cd07336">
    <property type="entry name" value="M48B_HtpX_like"/>
    <property type="match status" value="1"/>
</dbReference>
<dbReference type="Gene3D" id="3.30.2010.10">
    <property type="entry name" value="Metalloproteases ('zincins'), catalytic domain"/>
    <property type="match status" value="1"/>
</dbReference>
<dbReference type="HAMAP" id="MF_00188">
    <property type="entry name" value="Pept_M48_protease_HtpX"/>
    <property type="match status" value="1"/>
</dbReference>
<dbReference type="InterPro" id="IPR050083">
    <property type="entry name" value="HtpX_protease"/>
</dbReference>
<dbReference type="InterPro" id="IPR022919">
    <property type="entry name" value="Pept_M48_protease_HtpX"/>
</dbReference>
<dbReference type="InterPro" id="IPR001915">
    <property type="entry name" value="Peptidase_M48"/>
</dbReference>
<dbReference type="NCBIfam" id="NF002826">
    <property type="entry name" value="PRK03001.1"/>
    <property type="match status" value="1"/>
</dbReference>
<dbReference type="PANTHER" id="PTHR43221">
    <property type="entry name" value="PROTEASE HTPX"/>
    <property type="match status" value="1"/>
</dbReference>
<dbReference type="PANTHER" id="PTHR43221:SF1">
    <property type="entry name" value="PROTEASE HTPX"/>
    <property type="match status" value="1"/>
</dbReference>
<dbReference type="Pfam" id="PF01435">
    <property type="entry name" value="Peptidase_M48"/>
    <property type="match status" value="1"/>
</dbReference>
<comment type="cofactor">
    <cofactor evidence="1">
        <name>Zn(2+)</name>
        <dbReference type="ChEBI" id="CHEBI:29105"/>
    </cofactor>
    <text evidence="1">Binds 1 zinc ion per subunit.</text>
</comment>
<comment type="subcellular location">
    <subcellularLocation>
        <location evidence="1">Cell inner membrane</location>
        <topology evidence="1">Multi-pass membrane protein</topology>
    </subcellularLocation>
</comment>
<comment type="similarity">
    <text evidence="1">Belongs to the peptidase M48B family.</text>
</comment>
<proteinExistence type="inferred from homology"/>
<gene>
    <name evidence="1" type="primary">htpX</name>
    <name type="ordered locus">Ccon26_06380</name>
    <name type="ORF">CCC13826_0879</name>
</gene>
<name>HTPX_CAMC1</name>